<proteinExistence type="evidence at protein level"/>
<reference key="1">
    <citation type="submission" date="1999-11" db="EMBL/GenBank/DDBJ databases">
        <title>Glu-tRNAGln amidotransferase of Staphylococcus aureus.</title>
        <authorList>
            <person name="Namgoong S."/>
            <person name="Hong K.-W."/>
            <person name="Lee S.Y."/>
        </authorList>
    </citation>
    <scope>NUCLEOTIDE SEQUENCE [GENOMIC DNA]</scope>
    <source>
        <strain>ATCC 25923 / DSM 1104 / JCM 2413 / NBRC 14462 / NCIMB 12702 / NCTC 12981 / Seattle 1945</strain>
    </source>
</reference>
<reference key="2">
    <citation type="journal article" date="2006" name="Infect. Immun.">
        <title>Identification of Staphylococcus aureus proteins recognized by the antibody-mediated immune response to a biofilm infection.</title>
        <authorList>
            <person name="Brady R.A."/>
            <person name="Leid J.G."/>
            <person name="Camper A.K."/>
            <person name="Costerton J.W."/>
            <person name="Shirtliff M.E."/>
        </authorList>
    </citation>
    <scope>MASS SPECTROMETRY</scope>
    <source>
        <strain>MRSA-M2</strain>
    </source>
</reference>
<dbReference type="EC" id="6.3.5.-" evidence="1"/>
<dbReference type="EMBL" id="AF205033">
    <property type="protein sequence ID" value="AAF18137.1"/>
    <property type="molecule type" value="Genomic_DNA"/>
</dbReference>
<dbReference type="RefSeq" id="WP_000545373.1">
    <property type="nucleotide sequence ID" value="NZ_WKIW01000007.1"/>
</dbReference>
<dbReference type="SMR" id="Q9RF06"/>
<dbReference type="OMA" id="ARKWWMG"/>
<dbReference type="GO" id="GO:0050566">
    <property type="term" value="F:asparaginyl-tRNA synthase (glutamine-hydrolyzing) activity"/>
    <property type="evidence" value="ECO:0007669"/>
    <property type="project" value="RHEA"/>
</dbReference>
<dbReference type="GO" id="GO:0005524">
    <property type="term" value="F:ATP binding"/>
    <property type="evidence" value="ECO:0007669"/>
    <property type="project" value="UniProtKB-KW"/>
</dbReference>
<dbReference type="GO" id="GO:0050567">
    <property type="term" value="F:glutaminyl-tRNA synthase (glutamine-hydrolyzing) activity"/>
    <property type="evidence" value="ECO:0007669"/>
    <property type="project" value="UniProtKB-UniRule"/>
</dbReference>
<dbReference type="GO" id="GO:0070681">
    <property type="term" value="P:glutaminyl-tRNAGln biosynthesis via transamidation"/>
    <property type="evidence" value="ECO:0007669"/>
    <property type="project" value="TreeGrafter"/>
</dbReference>
<dbReference type="GO" id="GO:0006412">
    <property type="term" value="P:translation"/>
    <property type="evidence" value="ECO:0007669"/>
    <property type="project" value="UniProtKB-UniRule"/>
</dbReference>
<dbReference type="FunFam" id="1.10.10.410:FF:000001">
    <property type="entry name" value="Aspartyl/glutamyl-tRNA(Asn/Gln) amidotransferase subunit B"/>
    <property type="match status" value="1"/>
</dbReference>
<dbReference type="FunFam" id="1.10.150.380:FF:000001">
    <property type="entry name" value="Aspartyl/glutamyl-tRNA(Asn/Gln) amidotransferase subunit B"/>
    <property type="match status" value="1"/>
</dbReference>
<dbReference type="Gene3D" id="1.10.10.410">
    <property type="match status" value="1"/>
</dbReference>
<dbReference type="Gene3D" id="1.10.150.380">
    <property type="entry name" value="GatB domain, N-terminal subdomain"/>
    <property type="match status" value="1"/>
</dbReference>
<dbReference type="HAMAP" id="MF_00121">
    <property type="entry name" value="GatB"/>
    <property type="match status" value="1"/>
</dbReference>
<dbReference type="InterPro" id="IPR017959">
    <property type="entry name" value="Asn/Gln-tRNA_amidoTrfase_suB/E"/>
</dbReference>
<dbReference type="InterPro" id="IPR006075">
    <property type="entry name" value="Asn/Gln-tRNA_Trfase_suB/E_cat"/>
</dbReference>
<dbReference type="InterPro" id="IPR018027">
    <property type="entry name" value="Asn/Gln_amidotransferase"/>
</dbReference>
<dbReference type="InterPro" id="IPR003789">
    <property type="entry name" value="Asn/Gln_tRNA_amidoTrase-B-like"/>
</dbReference>
<dbReference type="InterPro" id="IPR004413">
    <property type="entry name" value="GatB"/>
</dbReference>
<dbReference type="InterPro" id="IPR042114">
    <property type="entry name" value="GatB_C_1"/>
</dbReference>
<dbReference type="InterPro" id="IPR023168">
    <property type="entry name" value="GatB_Yqey_C_2"/>
</dbReference>
<dbReference type="InterPro" id="IPR017958">
    <property type="entry name" value="Gln-tRNA_amidoTrfase_suB_CS"/>
</dbReference>
<dbReference type="InterPro" id="IPR014746">
    <property type="entry name" value="Gln_synth/guanido_kin_cat_dom"/>
</dbReference>
<dbReference type="NCBIfam" id="TIGR00133">
    <property type="entry name" value="gatB"/>
    <property type="match status" value="1"/>
</dbReference>
<dbReference type="NCBIfam" id="NF004011">
    <property type="entry name" value="PRK05477.1-1"/>
    <property type="match status" value="1"/>
</dbReference>
<dbReference type="NCBIfam" id="NF004012">
    <property type="entry name" value="PRK05477.1-2"/>
    <property type="match status" value="1"/>
</dbReference>
<dbReference type="NCBIfam" id="NF004014">
    <property type="entry name" value="PRK05477.1-4"/>
    <property type="match status" value="1"/>
</dbReference>
<dbReference type="PANTHER" id="PTHR11659">
    <property type="entry name" value="GLUTAMYL-TRNA GLN AMIDOTRANSFERASE SUBUNIT B MITOCHONDRIAL AND PROKARYOTIC PET112-RELATED"/>
    <property type="match status" value="1"/>
</dbReference>
<dbReference type="PANTHER" id="PTHR11659:SF0">
    <property type="entry name" value="GLUTAMYL-TRNA(GLN) AMIDOTRANSFERASE SUBUNIT B, MITOCHONDRIAL"/>
    <property type="match status" value="1"/>
</dbReference>
<dbReference type="Pfam" id="PF02934">
    <property type="entry name" value="GatB_N"/>
    <property type="match status" value="1"/>
</dbReference>
<dbReference type="Pfam" id="PF02637">
    <property type="entry name" value="GatB_Yqey"/>
    <property type="match status" value="1"/>
</dbReference>
<dbReference type="SMART" id="SM00845">
    <property type="entry name" value="GatB_Yqey"/>
    <property type="match status" value="1"/>
</dbReference>
<dbReference type="SUPFAM" id="SSF89095">
    <property type="entry name" value="GatB/YqeY motif"/>
    <property type="match status" value="1"/>
</dbReference>
<dbReference type="SUPFAM" id="SSF55931">
    <property type="entry name" value="Glutamine synthetase/guanido kinase"/>
    <property type="match status" value="1"/>
</dbReference>
<dbReference type="PROSITE" id="PS01234">
    <property type="entry name" value="GATB"/>
    <property type="match status" value="1"/>
</dbReference>
<organism>
    <name type="scientific">Staphylococcus aureus</name>
    <dbReference type="NCBI Taxonomy" id="1280"/>
    <lineage>
        <taxon>Bacteria</taxon>
        <taxon>Bacillati</taxon>
        <taxon>Bacillota</taxon>
        <taxon>Bacilli</taxon>
        <taxon>Bacillales</taxon>
        <taxon>Staphylococcaceae</taxon>
        <taxon>Staphylococcus</taxon>
    </lineage>
</organism>
<keyword id="KW-0067">ATP-binding</keyword>
<keyword id="KW-0436">Ligase</keyword>
<keyword id="KW-0547">Nucleotide-binding</keyword>
<keyword id="KW-0648">Protein biosynthesis</keyword>
<name>GATB_STAAU</name>
<feature type="chain" id="PRO_0000148839" description="Aspartyl/glutamyl-tRNA(Asn/Gln) amidotransferase subunit B">
    <location>
        <begin position="1"/>
        <end position="475"/>
    </location>
</feature>
<accession>Q9RF06</accession>
<evidence type="ECO:0000255" key="1">
    <source>
        <dbReference type="HAMAP-Rule" id="MF_00121"/>
    </source>
</evidence>
<evidence type="ECO:0000269" key="2">
    <source>
    </source>
</evidence>
<protein>
    <recommendedName>
        <fullName evidence="1">Aspartyl/glutamyl-tRNA(Asn/Gln) amidotransferase subunit B</fullName>
        <shortName evidence="1">Asp/Glu-ADT subunit B</shortName>
        <ecNumber evidence="1">6.3.5.-</ecNumber>
    </recommendedName>
</protein>
<comment type="function">
    <text evidence="1">Allows the formation of correctly charged Asn-tRNA(Asn) or Gln-tRNA(Gln) through the transamidation of misacylated Asp-tRNA(Asn) or Glu-tRNA(Gln) in organisms which lack either or both of asparaginyl-tRNA or glutaminyl-tRNA synthetases. The reaction takes place in the presence of glutamine and ATP through an activated phospho-Asp-tRNA(Asn) or phospho-Glu-tRNA(Gln).</text>
</comment>
<comment type="catalytic activity">
    <reaction evidence="1">
        <text>L-glutamyl-tRNA(Gln) + L-glutamine + ATP + H2O = L-glutaminyl-tRNA(Gln) + L-glutamate + ADP + phosphate + H(+)</text>
        <dbReference type="Rhea" id="RHEA:17521"/>
        <dbReference type="Rhea" id="RHEA-COMP:9681"/>
        <dbReference type="Rhea" id="RHEA-COMP:9684"/>
        <dbReference type="ChEBI" id="CHEBI:15377"/>
        <dbReference type="ChEBI" id="CHEBI:15378"/>
        <dbReference type="ChEBI" id="CHEBI:29985"/>
        <dbReference type="ChEBI" id="CHEBI:30616"/>
        <dbReference type="ChEBI" id="CHEBI:43474"/>
        <dbReference type="ChEBI" id="CHEBI:58359"/>
        <dbReference type="ChEBI" id="CHEBI:78520"/>
        <dbReference type="ChEBI" id="CHEBI:78521"/>
        <dbReference type="ChEBI" id="CHEBI:456216"/>
    </reaction>
</comment>
<comment type="catalytic activity">
    <reaction evidence="1">
        <text>L-aspartyl-tRNA(Asn) + L-glutamine + ATP + H2O = L-asparaginyl-tRNA(Asn) + L-glutamate + ADP + phosphate + 2 H(+)</text>
        <dbReference type="Rhea" id="RHEA:14513"/>
        <dbReference type="Rhea" id="RHEA-COMP:9674"/>
        <dbReference type="Rhea" id="RHEA-COMP:9677"/>
        <dbReference type="ChEBI" id="CHEBI:15377"/>
        <dbReference type="ChEBI" id="CHEBI:15378"/>
        <dbReference type="ChEBI" id="CHEBI:29985"/>
        <dbReference type="ChEBI" id="CHEBI:30616"/>
        <dbReference type="ChEBI" id="CHEBI:43474"/>
        <dbReference type="ChEBI" id="CHEBI:58359"/>
        <dbReference type="ChEBI" id="CHEBI:78515"/>
        <dbReference type="ChEBI" id="CHEBI:78516"/>
        <dbReference type="ChEBI" id="CHEBI:456216"/>
    </reaction>
</comment>
<comment type="subunit">
    <text evidence="1">Heterotrimer of A, B and C subunits.</text>
</comment>
<comment type="mass spectrometry"/>
<comment type="similarity">
    <text evidence="1">Belongs to the GatB/GatE family. GatB subfamily.</text>
</comment>
<sequence>MHFETVIGLEVHVELKTDSKMFSPSPAHFGAEPNSNTNVIDLAYPGVLPVVNKRAVDWAMRAAMALNMEIATESKFDRKNYFYPDNPKAYQISQFDQPIGENGYIDIEVDGETKRIGITRLHMEEDAGKSTHKGEYSLVDLNRQGTPLIEIVSEPDIRSPKEAYAYLEKLRSIIQYTGVSDVKMEEGSLRCDANISLRPYGQEKFGTKAELKNLNSFNYVRKGLEYEEKRQEEELLSGGEIGQETRRFDESTGKTILMRVKEGSDDYRYFPEPDIVPLYIDDAWKERVRQTIPELPDERKAKYVNELGLPAYDAHVLTLTKEMSDFFESTIEHGADVKLTSNWLMGGVNEYLNKNQVELLDTKLTPENLAGMIKLIEDGTMSSKIAKKVFPELAAKGGNAKQIMEDNGLVQISDEATLLKFVNEALDNNEQSVEDYKNGKGKAMGFLVGQIMKASKGQANPQLVNQLLKQELDKR</sequence>
<gene>
    <name evidence="1" type="primary">gatB</name>
</gene>